<feature type="chain" id="PRO_1000057035" description="Adenine phosphoribosyltransferase">
    <location>
        <begin position="1"/>
        <end position="170"/>
    </location>
</feature>
<sequence length="170" mass="18996">MDLRKFIRDIPDFPFEGIIFRDVTPLLKNPQAFQAAIDKMAETVSDIDFDLIVAPEARGFIFGSALAYKLHKGFIPVRKPGKLPYETTSIEYDLEYGTAKLQIHSDAIDKGEKILLVDDVLATGGTANAIAQLVKKLGGEVAGTCFLVELTYLNPRERLRDYLIRTVISY</sequence>
<gene>
    <name evidence="1" type="primary">apt</name>
    <name type="ordered locus">Tlet_1659</name>
</gene>
<keyword id="KW-0963">Cytoplasm</keyword>
<keyword id="KW-0328">Glycosyltransferase</keyword>
<keyword id="KW-0660">Purine salvage</keyword>
<keyword id="KW-1185">Reference proteome</keyword>
<keyword id="KW-0808">Transferase</keyword>
<reference key="1">
    <citation type="submission" date="2007-08" db="EMBL/GenBank/DDBJ databases">
        <title>Complete sequence of Thermotoga lettingae TMO.</title>
        <authorList>
            <consortium name="US DOE Joint Genome Institute"/>
            <person name="Copeland A."/>
            <person name="Lucas S."/>
            <person name="Lapidus A."/>
            <person name="Barry K."/>
            <person name="Glavina del Rio T."/>
            <person name="Dalin E."/>
            <person name="Tice H."/>
            <person name="Pitluck S."/>
            <person name="Foster B."/>
            <person name="Bruce D."/>
            <person name="Schmutz J."/>
            <person name="Larimer F."/>
            <person name="Land M."/>
            <person name="Hauser L."/>
            <person name="Kyrpides N."/>
            <person name="Mikhailova N."/>
            <person name="Nelson K."/>
            <person name="Gogarten J.P."/>
            <person name="Noll K."/>
            <person name="Richardson P."/>
        </authorList>
    </citation>
    <scope>NUCLEOTIDE SEQUENCE [LARGE SCALE GENOMIC DNA]</scope>
    <source>
        <strain>ATCC BAA-301 / DSM 14385 / NBRC 107922 / TMO</strain>
    </source>
</reference>
<comment type="function">
    <text evidence="1">Catalyzes a salvage reaction resulting in the formation of AMP, that is energically less costly than de novo synthesis.</text>
</comment>
<comment type="catalytic activity">
    <reaction evidence="1">
        <text>AMP + diphosphate = 5-phospho-alpha-D-ribose 1-diphosphate + adenine</text>
        <dbReference type="Rhea" id="RHEA:16609"/>
        <dbReference type="ChEBI" id="CHEBI:16708"/>
        <dbReference type="ChEBI" id="CHEBI:33019"/>
        <dbReference type="ChEBI" id="CHEBI:58017"/>
        <dbReference type="ChEBI" id="CHEBI:456215"/>
        <dbReference type="EC" id="2.4.2.7"/>
    </reaction>
</comment>
<comment type="pathway">
    <text evidence="1">Purine metabolism; AMP biosynthesis via salvage pathway; AMP from adenine: step 1/1.</text>
</comment>
<comment type="subunit">
    <text evidence="1">Homodimer.</text>
</comment>
<comment type="subcellular location">
    <subcellularLocation>
        <location evidence="1">Cytoplasm</location>
    </subcellularLocation>
</comment>
<comment type="similarity">
    <text evidence="1">Belongs to the purine/pyrimidine phosphoribosyltransferase family.</text>
</comment>
<dbReference type="EC" id="2.4.2.7" evidence="1"/>
<dbReference type="EMBL" id="CP000812">
    <property type="protein sequence ID" value="ABV34213.1"/>
    <property type="molecule type" value="Genomic_DNA"/>
</dbReference>
<dbReference type="RefSeq" id="WP_012003689.1">
    <property type="nucleotide sequence ID" value="NZ_BSDV01000001.1"/>
</dbReference>
<dbReference type="SMR" id="A8F7S9"/>
<dbReference type="STRING" id="416591.Tlet_1659"/>
<dbReference type="KEGG" id="tle:Tlet_1659"/>
<dbReference type="eggNOG" id="COG0503">
    <property type="taxonomic scope" value="Bacteria"/>
</dbReference>
<dbReference type="HOGENOM" id="CLU_063339_3_0_0"/>
<dbReference type="OrthoDB" id="9803963at2"/>
<dbReference type="UniPathway" id="UPA00588">
    <property type="reaction ID" value="UER00646"/>
</dbReference>
<dbReference type="Proteomes" id="UP000002016">
    <property type="component" value="Chromosome"/>
</dbReference>
<dbReference type="GO" id="GO:0005737">
    <property type="term" value="C:cytoplasm"/>
    <property type="evidence" value="ECO:0007669"/>
    <property type="project" value="UniProtKB-SubCell"/>
</dbReference>
<dbReference type="GO" id="GO:0002055">
    <property type="term" value="F:adenine binding"/>
    <property type="evidence" value="ECO:0007669"/>
    <property type="project" value="TreeGrafter"/>
</dbReference>
<dbReference type="GO" id="GO:0003999">
    <property type="term" value="F:adenine phosphoribosyltransferase activity"/>
    <property type="evidence" value="ECO:0007669"/>
    <property type="project" value="UniProtKB-UniRule"/>
</dbReference>
<dbReference type="GO" id="GO:0016208">
    <property type="term" value="F:AMP binding"/>
    <property type="evidence" value="ECO:0007669"/>
    <property type="project" value="TreeGrafter"/>
</dbReference>
<dbReference type="GO" id="GO:0006168">
    <property type="term" value="P:adenine salvage"/>
    <property type="evidence" value="ECO:0007669"/>
    <property type="project" value="InterPro"/>
</dbReference>
<dbReference type="GO" id="GO:0044209">
    <property type="term" value="P:AMP salvage"/>
    <property type="evidence" value="ECO:0007669"/>
    <property type="project" value="UniProtKB-UniRule"/>
</dbReference>
<dbReference type="GO" id="GO:0006166">
    <property type="term" value="P:purine ribonucleoside salvage"/>
    <property type="evidence" value="ECO:0007669"/>
    <property type="project" value="UniProtKB-KW"/>
</dbReference>
<dbReference type="CDD" id="cd06223">
    <property type="entry name" value="PRTases_typeI"/>
    <property type="match status" value="1"/>
</dbReference>
<dbReference type="FunFam" id="3.40.50.2020:FF:000004">
    <property type="entry name" value="Adenine phosphoribosyltransferase"/>
    <property type="match status" value="1"/>
</dbReference>
<dbReference type="Gene3D" id="3.40.50.2020">
    <property type="match status" value="1"/>
</dbReference>
<dbReference type="HAMAP" id="MF_00004">
    <property type="entry name" value="Aden_phosphoribosyltr"/>
    <property type="match status" value="1"/>
</dbReference>
<dbReference type="InterPro" id="IPR005764">
    <property type="entry name" value="Ade_phspho_trans"/>
</dbReference>
<dbReference type="InterPro" id="IPR000836">
    <property type="entry name" value="PRibTrfase_dom"/>
</dbReference>
<dbReference type="InterPro" id="IPR029057">
    <property type="entry name" value="PRTase-like"/>
</dbReference>
<dbReference type="InterPro" id="IPR050054">
    <property type="entry name" value="UPRTase/APRTase"/>
</dbReference>
<dbReference type="NCBIfam" id="TIGR01090">
    <property type="entry name" value="apt"/>
    <property type="match status" value="1"/>
</dbReference>
<dbReference type="NCBIfam" id="NF002633">
    <property type="entry name" value="PRK02304.1-2"/>
    <property type="match status" value="1"/>
</dbReference>
<dbReference type="NCBIfam" id="NF002634">
    <property type="entry name" value="PRK02304.1-3"/>
    <property type="match status" value="1"/>
</dbReference>
<dbReference type="NCBIfam" id="NF002636">
    <property type="entry name" value="PRK02304.1-5"/>
    <property type="match status" value="1"/>
</dbReference>
<dbReference type="PANTHER" id="PTHR32315">
    <property type="entry name" value="ADENINE PHOSPHORIBOSYLTRANSFERASE"/>
    <property type="match status" value="1"/>
</dbReference>
<dbReference type="PANTHER" id="PTHR32315:SF3">
    <property type="entry name" value="ADENINE PHOSPHORIBOSYLTRANSFERASE"/>
    <property type="match status" value="1"/>
</dbReference>
<dbReference type="Pfam" id="PF00156">
    <property type="entry name" value="Pribosyltran"/>
    <property type="match status" value="1"/>
</dbReference>
<dbReference type="SUPFAM" id="SSF53271">
    <property type="entry name" value="PRTase-like"/>
    <property type="match status" value="1"/>
</dbReference>
<dbReference type="PROSITE" id="PS00103">
    <property type="entry name" value="PUR_PYR_PR_TRANSFER"/>
    <property type="match status" value="1"/>
</dbReference>
<accession>A8F7S9</accession>
<protein>
    <recommendedName>
        <fullName evidence="1">Adenine phosphoribosyltransferase</fullName>
        <shortName evidence="1">APRT</shortName>
        <ecNumber evidence="1">2.4.2.7</ecNumber>
    </recommendedName>
</protein>
<name>APT_PSELT</name>
<evidence type="ECO:0000255" key="1">
    <source>
        <dbReference type="HAMAP-Rule" id="MF_00004"/>
    </source>
</evidence>
<proteinExistence type="inferred from homology"/>
<organism>
    <name type="scientific">Pseudothermotoga lettingae (strain ATCC BAA-301 / DSM 14385 / NBRC 107922 / TMO)</name>
    <name type="common">Thermotoga lettingae</name>
    <dbReference type="NCBI Taxonomy" id="416591"/>
    <lineage>
        <taxon>Bacteria</taxon>
        <taxon>Thermotogati</taxon>
        <taxon>Thermotogota</taxon>
        <taxon>Thermotogae</taxon>
        <taxon>Thermotogales</taxon>
        <taxon>Thermotogaceae</taxon>
        <taxon>Pseudothermotoga</taxon>
    </lineage>
</organism>